<protein>
    <recommendedName>
        <fullName evidence="1">UDP-N-acetylmuramate--L-alanine ligase</fullName>
        <ecNumber evidence="1">6.3.2.8</ecNumber>
    </recommendedName>
    <alternativeName>
        <fullName evidence="1">UDP-N-acetylmuramoyl-L-alanine synthetase</fullName>
    </alternativeName>
</protein>
<evidence type="ECO:0000255" key="1">
    <source>
        <dbReference type="HAMAP-Rule" id="MF_00046"/>
    </source>
</evidence>
<sequence>MKLPHELGPIHFIGIGGIGMSGIAEVLINLGYSVQGSDAAENANVLRLRRKGAIIHIGHRADNLGDAEVVVVSTAIKRNNPELAYARELRLPVVRRAEMLAELMRLKQCVAIAGTHGKTTTTSLVATLLEAGGFDPTVINGGIINAYGTNSRLGAGDWMVVEADESDGTFLKLPADVAIITNIDPEHLDHFGTFENIRKAFRSFVENIPFYGFAVMCLDHPTVQELVGQIEDRRVITYGENPHADVRLVDIDLAGGMSRFSVVVRDRKSGGETVIEKILMPMPGLHNALNATAAIAVAHQLGMSPDQIRGALAGFGGVKRRFTRTGEWNGAIVFDDYAHHPVEIAAVLKAARASTKGRVIAIVQPHRYTRLHSLFNEFAACFNDADAVIVADVYPAGEAPIEGADRDGLVAAIKARGHRLAMPLARPADLSRLVRQLARPGDYIVLLGAGNITQWAYALPGELAASAA</sequence>
<comment type="function">
    <text evidence="1">Cell wall formation.</text>
</comment>
<comment type="catalytic activity">
    <reaction evidence="1">
        <text>UDP-N-acetyl-alpha-D-muramate + L-alanine + ATP = UDP-N-acetyl-alpha-D-muramoyl-L-alanine + ADP + phosphate + H(+)</text>
        <dbReference type="Rhea" id="RHEA:23372"/>
        <dbReference type="ChEBI" id="CHEBI:15378"/>
        <dbReference type="ChEBI" id="CHEBI:30616"/>
        <dbReference type="ChEBI" id="CHEBI:43474"/>
        <dbReference type="ChEBI" id="CHEBI:57972"/>
        <dbReference type="ChEBI" id="CHEBI:70757"/>
        <dbReference type="ChEBI" id="CHEBI:83898"/>
        <dbReference type="ChEBI" id="CHEBI:456216"/>
        <dbReference type="EC" id="6.3.2.8"/>
    </reaction>
</comment>
<comment type="pathway">
    <text evidence="1">Cell wall biogenesis; peptidoglycan biosynthesis.</text>
</comment>
<comment type="subcellular location">
    <subcellularLocation>
        <location evidence="1">Cytoplasm</location>
    </subcellularLocation>
</comment>
<comment type="similarity">
    <text evidence="1">Belongs to the MurCDEF family.</text>
</comment>
<feature type="chain" id="PRO_1000192101" description="UDP-N-acetylmuramate--L-alanine ligase">
    <location>
        <begin position="1"/>
        <end position="468"/>
    </location>
</feature>
<feature type="binding site" evidence="1">
    <location>
        <begin position="114"/>
        <end position="120"/>
    </location>
    <ligand>
        <name>ATP</name>
        <dbReference type="ChEBI" id="CHEBI:30616"/>
    </ligand>
</feature>
<proteinExistence type="inferred from homology"/>
<name>MURC_METSB</name>
<gene>
    <name evidence="1" type="primary">murC</name>
    <name type="ordered locus">Msil_3488</name>
</gene>
<accession>B8ETM5</accession>
<keyword id="KW-0067">ATP-binding</keyword>
<keyword id="KW-0131">Cell cycle</keyword>
<keyword id="KW-0132">Cell division</keyword>
<keyword id="KW-0133">Cell shape</keyword>
<keyword id="KW-0961">Cell wall biogenesis/degradation</keyword>
<keyword id="KW-0963">Cytoplasm</keyword>
<keyword id="KW-0436">Ligase</keyword>
<keyword id="KW-0547">Nucleotide-binding</keyword>
<keyword id="KW-0573">Peptidoglycan synthesis</keyword>
<keyword id="KW-1185">Reference proteome</keyword>
<dbReference type="EC" id="6.3.2.8" evidence="1"/>
<dbReference type="EMBL" id="CP001280">
    <property type="protein sequence ID" value="ACK52377.1"/>
    <property type="molecule type" value="Genomic_DNA"/>
</dbReference>
<dbReference type="RefSeq" id="WP_012592446.1">
    <property type="nucleotide sequence ID" value="NC_011666.1"/>
</dbReference>
<dbReference type="SMR" id="B8ETM5"/>
<dbReference type="STRING" id="395965.Msil_3488"/>
<dbReference type="KEGG" id="msl:Msil_3488"/>
<dbReference type="eggNOG" id="COG0773">
    <property type="taxonomic scope" value="Bacteria"/>
</dbReference>
<dbReference type="HOGENOM" id="CLU_028104_2_2_5"/>
<dbReference type="OrthoDB" id="9804126at2"/>
<dbReference type="UniPathway" id="UPA00219"/>
<dbReference type="Proteomes" id="UP000002257">
    <property type="component" value="Chromosome"/>
</dbReference>
<dbReference type="GO" id="GO:0005737">
    <property type="term" value="C:cytoplasm"/>
    <property type="evidence" value="ECO:0007669"/>
    <property type="project" value="UniProtKB-SubCell"/>
</dbReference>
<dbReference type="GO" id="GO:0005524">
    <property type="term" value="F:ATP binding"/>
    <property type="evidence" value="ECO:0007669"/>
    <property type="project" value="UniProtKB-UniRule"/>
</dbReference>
<dbReference type="GO" id="GO:0008763">
    <property type="term" value="F:UDP-N-acetylmuramate-L-alanine ligase activity"/>
    <property type="evidence" value="ECO:0007669"/>
    <property type="project" value="UniProtKB-UniRule"/>
</dbReference>
<dbReference type="GO" id="GO:0051301">
    <property type="term" value="P:cell division"/>
    <property type="evidence" value="ECO:0007669"/>
    <property type="project" value="UniProtKB-KW"/>
</dbReference>
<dbReference type="GO" id="GO:0071555">
    <property type="term" value="P:cell wall organization"/>
    <property type="evidence" value="ECO:0007669"/>
    <property type="project" value="UniProtKB-KW"/>
</dbReference>
<dbReference type="GO" id="GO:0009252">
    <property type="term" value="P:peptidoglycan biosynthetic process"/>
    <property type="evidence" value="ECO:0007669"/>
    <property type="project" value="UniProtKB-UniRule"/>
</dbReference>
<dbReference type="GO" id="GO:0008360">
    <property type="term" value="P:regulation of cell shape"/>
    <property type="evidence" value="ECO:0007669"/>
    <property type="project" value="UniProtKB-KW"/>
</dbReference>
<dbReference type="Gene3D" id="3.90.190.20">
    <property type="entry name" value="Mur ligase, C-terminal domain"/>
    <property type="match status" value="1"/>
</dbReference>
<dbReference type="Gene3D" id="3.40.1190.10">
    <property type="entry name" value="Mur-like, catalytic domain"/>
    <property type="match status" value="1"/>
</dbReference>
<dbReference type="Gene3D" id="3.40.50.720">
    <property type="entry name" value="NAD(P)-binding Rossmann-like Domain"/>
    <property type="match status" value="1"/>
</dbReference>
<dbReference type="HAMAP" id="MF_00046">
    <property type="entry name" value="MurC"/>
    <property type="match status" value="1"/>
</dbReference>
<dbReference type="InterPro" id="IPR036565">
    <property type="entry name" value="Mur-like_cat_sf"/>
</dbReference>
<dbReference type="InterPro" id="IPR004101">
    <property type="entry name" value="Mur_ligase_C"/>
</dbReference>
<dbReference type="InterPro" id="IPR036615">
    <property type="entry name" value="Mur_ligase_C_dom_sf"/>
</dbReference>
<dbReference type="InterPro" id="IPR013221">
    <property type="entry name" value="Mur_ligase_cen"/>
</dbReference>
<dbReference type="InterPro" id="IPR000713">
    <property type="entry name" value="Mur_ligase_N"/>
</dbReference>
<dbReference type="InterPro" id="IPR050061">
    <property type="entry name" value="MurCDEF_pg_biosynth"/>
</dbReference>
<dbReference type="InterPro" id="IPR005758">
    <property type="entry name" value="UDP-N-AcMur_Ala_ligase_MurC"/>
</dbReference>
<dbReference type="NCBIfam" id="TIGR01082">
    <property type="entry name" value="murC"/>
    <property type="match status" value="1"/>
</dbReference>
<dbReference type="PANTHER" id="PTHR43445:SF3">
    <property type="entry name" value="UDP-N-ACETYLMURAMATE--L-ALANINE LIGASE"/>
    <property type="match status" value="1"/>
</dbReference>
<dbReference type="PANTHER" id="PTHR43445">
    <property type="entry name" value="UDP-N-ACETYLMURAMATE--L-ALANINE LIGASE-RELATED"/>
    <property type="match status" value="1"/>
</dbReference>
<dbReference type="Pfam" id="PF01225">
    <property type="entry name" value="Mur_ligase"/>
    <property type="match status" value="1"/>
</dbReference>
<dbReference type="Pfam" id="PF02875">
    <property type="entry name" value="Mur_ligase_C"/>
    <property type="match status" value="1"/>
</dbReference>
<dbReference type="Pfam" id="PF08245">
    <property type="entry name" value="Mur_ligase_M"/>
    <property type="match status" value="1"/>
</dbReference>
<dbReference type="SUPFAM" id="SSF51984">
    <property type="entry name" value="MurCD N-terminal domain"/>
    <property type="match status" value="1"/>
</dbReference>
<dbReference type="SUPFAM" id="SSF53623">
    <property type="entry name" value="MurD-like peptide ligases, catalytic domain"/>
    <property type="match status" value="1"/>
</dbReference>
<dbReference type="SUPFAM" id="SSF53244">
    <property type="entry name" value="MurD-like peptide ligases, peptide-binding domain"/>
    <property type="match status" value="1"/>
</dbReference>
<organism>
    <name type="scientific">Methylocella silvestris (strain DSM 15510 / CIP 108128 / LMG 27833 / NCIMB 13906 / BL2)</name>
    <dbReference type="NCBI Taxonomy" id="395965"/>
    <lineage>
        <taxon>Bacteria</taxon>
        <taxon>Pseudomonadati</taxon>
        <taxon>Pseudomonadota</taxon>
        <taxon>Alphaproteobacteria</taxon>
        <taxon>Hyphomicrobiales</taxon>
        <taxon>Beijerinckiaceae</taxon>
        <taxon>Methylocella</taxon>
    </lineage>
</organism>
<reference key="1">
    <citation type="journal article" date="2010" name="J. Bacteriol.">
        <title>Complete genome sequence of the aerobic facultative methanotroph Methylocella silvestris BL2.</title>
        <authorList>
            <person name="Chen Y."/>
            <person name="Crombie A."/>
            <person name="Rahman M.T."/>
            <person name="Dedysh S.N."/>
            <person name="Liesack W."/>
            <person name="Stott M.B."/>
            <person name="Alam M."/>
            <person name="Theisen A.R."/>
            <person name="Murrell J.C."/>
            <person name="Dunfield P.F."/>
        </authorList>
    </citation>
    <scope>NUCLEOTIDE SEQUENCE [LARGE SCALE GENOMIC DNA]</scope>
    <source>
        <strain>DSM 15510 / CIP 108128 / LMG 27833 / NCIMB 13906 / BL2</strain>
    </source>
</reference>